<feature type="chain" id="PRO_0000405706" description="CRP-like protein Clp">
    <location>
        <begin position="1"/>
        <end position="230"/>
    </location>
</feature>
<feature type="domain" description="HTH crp-type" evidence="2">
    <location>
        <begin position="158"/>
        <end position="230"/>
    </location>
</feature>
<feature type="DNA-binding region" description="H-T-H motif" evidence="2">
    <location>
        <begin position="190"/>
        <end position="209"/>
    </location>
</feature>
<feature type="binding site">
    <location>
        <begin position="18"/>
        <end position="139"/>
    </location>
    <ligand>
        <name>a nucleoside 3',5'-cyclic phosphate</name>
        <dbReference type="ChEBI" id="CHEBI:58464"/>
    </ligand>
</feature>
<reference key="1">
    <citation type="journal article" date="2005" name="Jpn. Agric. Res. Q.">
        <title>Genome sequence of Xanthomonas oryzae pv. oryzae suggests contribution of large numbers of effector genes and insertion sequences to its race diversity.</title>
        <authorList>
            <person name="Ochiai H."/>
            <person name="Inoue Y."/>
            <person name="Takeya M."/>
            <person name="Sasaki A."/>
            <person name="Kaku H."/>
        </authorList>
    </citation>
    <scope>NUCLEOTIDE SEQUENCE [LARGE SCALE GENOMIC DNA]</scope>
    <source>
        <strain>MAFF 311018</strain>
    </source>
</reference>
<evidence type="ECO:0000250" key="1"/>
<evidence type="ECO:0000255" key="2">
    <source>
        <dbReference type="PROSITE-ProRule" id="PRU00387"/>
    </source>
</evidence>
<evidence type="ECO:0000305" key="3"/>
<accession>Q2NYD9</accession>
<name>CLP_XANOM</name>
<comment type="function">
    <text evidence="1">Global transcriptional regulator that regulates virulence factors production by activating or repressing the expression of a large set of genes in diffusible signal factor (DSF) pathway.</text>
</comment>
<comment type="activity regulation">
    <text evidence="1">Allosterically inhibited by cyclic di-GMP (c-di-GMP), which binds to Clp and abolishes its ability to bind its target gene promoter.</text>
</comment>
<comment type="subunit">
    <text evidence="1">Homodimer.</text>
</comment>
<comment type="subcellular location">
    <subcellularLocation>
        <location evidence="3">Cytoplasm</location>
    </subcellularLocation>
</comment>
<comment type="domain">
    <text evidence="1">Binding of c-di-GMP appears to trigger the active Clp conformation into an open form or inactive state, hence abolishing its DNA-binding ability.</text>
</comment>
<organism>
    <name type="scientific">Xanthomonas oryzae pv. oryzae (strain MAFF 311018)</name>
    <dbReference type="NCBI Taxonomy" id="342109"/>
    <lineage>
        <taxon>Bacteria</taxon>
        <taxon>Pseudomonadati</taxon>
        <taxon>Pseudomonadota</taxon>
        <taxon>Gammaproteobacteria</taxon>
        <taxon>Lysobacterales</taxon>
        <taxon>Lysobacteraceae</taxon>
        <taxon>Xanthomonas</taxon>
    </lineage>
</organism>
<dbReference type="EMBL" id="AP008229">
    <property type="protein sequence ID" value="BAE70688.1"/>
    <property type="molecule type" value="Genomic_DNA"/>
</dbReference>
<dbReference type="SMR" id="Q2NYD9"/>
<dbReference type="KEGG" id="xom:XOO3933"/>
<dbReference type="HOGENOM" id="CLU_075053_3_5_6"/>
<dbReference type="GO" id="GO:0005829">
    <property type="term" value="C:cytosol"/>
    <property type="evidence" value="ECO:0007669"/>
    <property type="project" value="TreeGrafter"/>
</dbReference>
<dbReference type="GO" id="GO:0003824">
    <property type="term" value="F:catalytic activity"/>
    <property type="evidence" value="ECO:0007669"/>
    <property type="project" value="UniProtKB-KW"/>
</dbReference>
<dbReference type="GO" id="GO:0035438">
    <property type="term" value="F:cyclic-di-GMP binding"/>
    <property type="evidence" value="ECO:0000250"/>
    <property type="project" value="UniProtKB"/>
</dbReference>
<dbReference type="GO" id="GO:0003677">
    <property type="term" value="F:DNA binding"/>
    <property type="evidence" value="ECO:0000250"/>
    <property type="project" value="UniProtKB"/>
</dbReference>
<dbReference type="GO" id="GO:0003700">
    <property type="term" value="F:DNA-binding transcription factor activity"/>
    <property type="evidence" value="ECO:0000250"/>
    <property type="project" value="UniProtKB"/>
</dbReference>
<dbReference type="GO" id="GO:0046983">
    <property type="term" value="F:protein dimerization activity"/>
    <property type="evidence" value="ECO:0000250"/>
    <property type="project" value="UniProtKB"/>
</dbReference>
<dbReference type="GO" id="GO:0006355">
    <property type="term" value="P:regulation of DNA-templated transcription"/>
    <property type="evidence" value="ECO:0000250"/>
    <property type="project" value="UniProtKB"/>
</dbReference>
<dbReference type="CDD" id="cd00038">
    <property type="entry name" value="CAP_ED"/>
    <property type="match status" value="1"/>
</dbReference>
<dbReference type="FunFam" id="1.10.10.10:FF:000006">
    <property type="entry name" value="cAMP-activated global transcriptional regulator CRP"/>
    <property type="match status" value="1"/>
</dbReference>
<dbReference type="FunFam" id="2.60.120.10:FF:000100">
    <property type="entry name" value="CRP-like protein Clp"/>
    <property type="match status" value="1"/>
</dbReference>
<dbReference type="Gene3D" id="2.60.120.10">
    <property type="entry name" value="Jelly Rolls"/>
    <property type="match status" value="1"/>
</dbReference>
<dbReference type="Gene3D" id="1.10.10.10">
    <property type="entry name" value="Winged helix-like DNA-binding domain superfamily/Winged helix DNA-binding domain"/>
    <property type="match status" value="1"/>
</dbReference>
<dbReference type="InterPro" id="IPR000595">
    <property type="entry name" value="cNMP-bd_dom"/>
</dbReference>
<dbReference type="InterPro" id="IPR018490">
    <property type="entry name" value="cNMP-bd_dom_sf"/>
</dbReference>
<dbReference type="InterPro" id="IPR050397">
    <property type="entry name" value="Env_Response_Regulators"/>
</dbReference>
<dbReference type="InterPro" id="IPR012318">
    <property type="entry name" value="HTH_CRP"/>
</dbReference>
<dbReference type="InterPro" id="IPR014710">
    <property type="entry name" value="RmlC-like_jellyroll"/>
</dbReference>
<dbReference type="InterPro" id="IPR018335">
    <property type="entry name" value="Tscrpt_reg_HTH_Crp-type_CS"/>
</dbReference>
<dbReference type="InterPro" id="IPR036388">
    <property type="entry name" value="WH-like_DNA-bd_sf"/>
</dbReference>
<dbReference type="InterPro" id="IPR036390">
    <property type="entry name" value="WH_DNA-bd_sf"/>
</dbReference>
<dbReference type="NCBIfam" id="NF008732">
    <property type="entry name" value="PRK11753.1"/>
    <property type="match status" value="1"/>
</dbReference>
<dbReference type="PANTHER" id="PTHR24567">
    <property type="entry name" value="CRP FAMILY TRANSCRIPTIONAL REGULATORY PROTEIN"/>
    <property type="match status" value="1"/>
</dbReference>
<dbReference type="PANTHER" id="PTHR24567:SF68">
    <property type="entry name" value="DNA-BINDING TRANSCRIPTIONAL DUAL REGULATOR CRP"/>
    <property type="match status" value="1"/>
</dbReference>
<dbReference type="Pfam" id="PF00027">
    <property type="entry name" value="cNMP_binding"/>
    <property type="match status" value="1"/>
</dbReference>
<dbReference type="Pfam" id="PF00325">
    <property type="entry name" value="Crp"/>
    <property type="match status" value="1"/>
</dbReference>
<dbReference type="PRINTS" id="PR00034">
    <property type="entry name" value="HTHCRP"/>
</dbReference>
<dbReference type="SMART" id="SM00100">
    <property type="entry name" value="cNMP"/>
    <property type="match status" value="1"/>
</dbReference>
<dbReference type="SMART" id="SM00419">
    <property type="entry name" value="HTH_CRP"/>
    <property type="match status" value="1"/>
</dbReference>
<dbReference type="SUPFAM" id="SSF51206">
    <property type="entry name" value="cAMP-binding domain-like"/>
    <property type="match status" value="1"/>
</dbReference>
<dbReference type="SUPFAM" id="SSF46785">
    <property type="entry name" value="Winged helix' DNA-binding domain"/>
    <property type="match status" value="1"/>
</dbReference>
<dbReference type="PROSITE" id="PS50042">
    <property type="entry name" value="CNMP_BINDING_3"/>
    <property type="match status" value="1"/>
</dbReference>
<dbReference type="PROSITE" id="PS00042">
    <property type="entry name" value="HTH_CRP_1"/>
    <property type="match status" value="1"/>
</dbReference>
<dbReference type="PROSITE" id="PS51063">
    <property type="entry name" value="HTH_CRP_2"/>
    <property type="match status" value="1"/>
</dbReference>
<gene>
    <name type="primary">clp</name>
    <name type="ordered locus">XOO3933</name>
</gene>
<keyword id="KW-0010">Activator</keyword>
<keyword id="KW-0021">Allosteric enzyme</keyword>
<keyword id="KW-0973">c-di-GMP</keyword>
<keyword id="KW-0963">Cytoplasm</keyword>
<keyword id="KW-0238">DNA-binding</keyword>
<keyword id="KW-0678">Repressor</keyword>
<keyword id="KW-0804">Transcription</keyword>
<keyword id="KW-0805">Transcription regulation</keyword>
<keyword id="KW-0843">Virulence</keyword>
<sequence length="230" mass="25641">MSSANTTVVTTTVRNATPSLALDAGTIERFLAHSHRRRYPTRTDVFRPGDPAGTLYYVISGSVSIIAEEDDDRELVLGYFGSGEFVGEMGLFIESDTREVILRTRTQCELAEISYERLQQLFQTSLSPDAPKILYAIGVQLSKRLLDTTRKASRLAFLDVTDRIVRTLHDLSKEPEAMSHPQGTQLRVSRQELARLVGCSREMAGRVLKKLQADGLLHARGKTVVLYGTR</sequence>
<proteinExistence type="inferred from homology"/>
<protein>
    <recommendedName>
        <fullName>CRP-like protein Clp</fullName>
    </recommendedName>
    <alternativeName>
        <fullName>Catabolite activation-like protein</fullName>
        <shortName>CAP-like</shortName>
    </alternativeName>
</protein>